<comment type="function">
    <text evidence="1">Component of specific cytoplasmic RNA granules involved in post-transcriptional regulation of specific genes: probably acts by binding to specific mRNAs and regulating their translation. Probably required during spermatogenesis (By similarity). Required for structural integrity of granules in primordial germ cells (PGCs).</text>
</comment>
<comment type="subcellular location">
    <subcellularLocation>
        <location>Cytoplasm</location>
    </subcellularLocation>
    <text evidence="1">Localizes to cytoplasmic RNA granules (By similarity). Component of the meiotic nuage, also named P granule, a germ-cell-specific organelle required to repress transposon activity during meiosis.</text>
</comment>
<comment type="alternative products">
    <event type="alternative splicing"/>
    <isoform>
        <id>A6NAF9-1</id>
        <name>1</name>
        <sequence type="displayed"/>
    </isoform>
    <isoform>
        <id>A6NAF9-2</id>
        <name>2</name>
        <sequence type="described" ref="VSP_041321 VSP_041322"/>
    </isoform>
</comment>
<comment type="developmental stage">
    <text evidence="7">In embryos, expression is restricted to primordial germ cells (PGCs).</text>
</comment>
<comment type="induction">
    <text evidence="5 6 7 8">Down-regulated by miR-430 in somatic cells. Down-regulation is relieved by dnd that acts by protecting the 3'-UTR of tdrd7 from miR-430-mediated RNA deadenylation.</text>
</comment>
<comment type="similarity">
    <text evidence="10">Belongs to the TDRD7 family.</text>
</comment>
<organism>
    <name type="scientific">Danio rerio</name>
    <name type="common">Zebrafish</name>
    <name type="synonym">Brachydanio rerio</name>
    <dbReference type="NCBI Taxonomy" id="7955"/>
    <lineage>
        <taxon>Eukaryota</taxon>
        <taxon>Metazoa</taxon>
        <taxon>Chordata</taxon>
        <taxon>Craniata</taxon>
        <taxon>Vertebrata</taxon>
        <taxon>Euteleostomi</taxon>
        <taxon>Actinopterygii</taxon>
        <taxon>Neopterygii</taxon>
        <taxon>Teleostei</taxon>
        <taxon>Ostariophysi</taxon>
        <taxon>Cypriniformes</taxon>
        <taxon>Danionidae</taxon>
        <taxon>Danioninae</taxon>
        <taxon>Danio</taxon>
    </lineage>
</organism>
<accession>A6NAF9</accession>
<accession>Q7ZTW1</accession>
<keyword id="KW-0025">Alternative splicing</keyword>
<keyword id="KW-0963">Cytoplasm</keyword>
<keyword id="KW-0221">Differentiation</keyword>
<keyword id="KW-1185">Reference proteome</keyword>
<keyword id="KW-0677">Repeat</keyword>
<keyword id="KW-0694">RNA-binding</keyword>
<keyword id="KW-0744">Spermatogenesis</keyword>
<proteinExistence type="evidence at transcript level"/>
<feature type="chain" id="PRO_0000409518" description="Tudor domain-containing protein 7A">
    <location>
        <begin position="1"/>
        <end position="1079"/>
    </location>
</feature>
<feature type="domain" description="HTH OST-type 1" evidence="3">
    <location>
        <begin position="3"/>
        <end position="76"/>
    </location>
</feature>
<feature type="domain" description="HTH OST-type 2" evidence="3">
    <location>
        <begin position="205"/>
        <end position="270"/>
    </location>
</feature>
<feature type="domain" description="HTH OST-type 3" evidence="3">
    <location>
        <begin position="366"/>
        <end position="434"/>
    </location>
</feature>
<feature type="domain" description="Tudor 1" evidence="2">
    <location>
        <begin position="519"/>
        <end position="576"/>
    </location>
</feature>
<feature type="domain" description="Tudor 2" evidence="2">
    <location>
        <begin position="708"/>
        <end position="765"/>
    </location>
</feature>
<feature type="region of interest" description="Disordered" evidence="4">
    <location>
        <begin position="153"/>
        <end position="175"/>
    </location>
</feature>
<feature type="splice variant" id="VSP_041321" description="In isoform 2." evidence="9">
    <location>
        <begin position="1"/>
        <end position="162"/>
    </location>
</feature>
<feature type="splice variant" id="VSP_041322" description="In isoform 2." evidence="9">
    <location>
        <begin position="408"/>
        <end position="913"/>
    </location>
</feature>
<feature type="sequence conflict" description="In Ref. 2; AAH52137." evidence="10" ref="2">
    <original>A</original>
    <variation>P</variation>
    <location>
        <position position="195"/>
    </location>
</feature>
<feature type="sequence conflict" description="In Ref. 2; AAH52137." evidence="10" ref="2">
    <original>KEV</original>
    <variation>QEA</variation>
    <location>
        <begin position="1010"/>
        <end position="1012"/>
    </location>
</feature>
<sequence length="1079" mass="121331">MSDVELVKKMLRAVLQSSKHGVAMARLQGDYRALTGEMIPFRKFGHDTLESFLRSIPGVVRLERSITGEVMCFAGVCEETAHIAQLVARQKNVKKTGCSKLLNFQMRARTSHLFSHNVKPRLSLRQPSNMTHPGRGSVTSFYSTQRKLYSNDLPSSRAPAWQMNRKSPVPEKTSVVPSKINTNIKTPLKKTSGTAAQQKPVNRADVELVQGRIKQLLQKYSSGVWLSKIPQLYKSMFQEELHIIQEVEKWTHICTVEKPGSNNIVDRLVYPVLEPVPKASPVPVKSPCKQSPNTALLKQPTLTQKTTRTFRTLAINIPQSTPKPQTPLSPTSPNSTMIDFTLSETPKTQSLSPITPPSTPPAHQPLTTELKQKLRQLLNKYSQGLWAHGLPQLFQEAFGCAFPQYVLEDLSLLADTCMVEYPMPDNRKRAILYTLPCQVQTQPRSRPPPLVLPCTSNPHVPPLIIPTADFHSVFVIEINSTNNVVVRFAGGGYSKSLEVMEEEMQNFYNNIGAGLCLLSPKIGQLVAVASSDGAMLRAQVHQLSEDKVKVYFLDHGFFDLVSRKTLFQLRDQFMTLPFQATTCQLAGLEPFSTDPVVLKTLQSLAVGRSLLAEIVEREDTPLVVLYDTSENDDVNVTAMCLKALQDKSMENPLQVNSVYTNVCVTNVCSDGSVYCQLPSRGQAKLKDIMDKIEAHFISQLTWELLVSRPFCGKVCLAKYKGKWARAEIINLHGSHVLDILFLDLGLPASLEVSELREIPPIFLKELITIPPQAIKCLLEDLNVDRAVWPPEAVLWLRETVHNKAPSCMKIVKLDETRTVHIYLFCGNEAQDIHDSVNRQLASCPFWKQDVYANKINKASELFLPDAGEPSGSSPAPSNALTLPPQLNLPLVGQNMDVFVSVACHPGHFVLQPWQDLYKLVVLMGEMVLFYNKQEVTTVDIQKNNVYAAKIDNNWHRVLVKGLLTNGLVSVYELDYGKYELINYTQLQPLIEEFRQLPFQGISAQLADVKKEVWCEEASMVFRNHVEKKPLVAQIESVEEGEWPWERKISVYLVDTTQENKDIWIHNIMKEFLDEISRDA</sequence>
<dbReference type="EMBL" id="EF643554">
    <property type="protein sequence ID" value="ABR24798.1"/>
    <property type="molecule type" value="mRNA"/>
</dbReference>
<dbReference type="EMBL" id="BC052137">
    <property type="protein sequence ID" value="AAH52137.1"/>
    <property type="molecule type" value="mRNA"/>
</dbReference>
<dbReference type="RefSeq" id="NP_998270.1">
    <property type="nucleotide sequence ID" value="NM_213105.1"/>
</dbReference>
<dbReference type="SMR" id="A6NAF9"/>
<dbReference type="FunCoup" id="A6NAF9">
    <property type="interactions" value="44"/>
</dbReference>
<dbReference type="STRING" id="7955.ENSDARP00000040306"/>
<dbReference type="PaxDb" id="7955-ENSDARP00000040306"/>
<dbReference type="PeptideAtlas" id="A6NAF9"/>
<dbReference type="AGR" id="ZFIN:ZDB-GENE-040426-2103"/>
<dbReference type="ZFIN" id="ZDB-GENE-040426-2103">
    <property type="gene designation" value="tdrd7a"/>
</dbReference>
<dbReference type="eggNOG" id="KOG2039">
    <property type="taxonomic scope" value="Eukaryota"/>
</dbReference>
<dbReference type="InParanoid" id="A6NAF9"/>
<dbReference type="OrthoDB" id="10034606at2759"/>
<dbReference type="PRO" id="PR:A6NAF9"/>
<dbReference type="Proteomes" id="UP000000437">
    <property type="component" value="Chromosome 1"/>
</dbReference>
<dbReference type="GO" id="GO:0043186">
    <property type="term" value="C:P granule"/>
    <property type="evidence" value="ECO:0000314"/>
    <property type="project" value="ZFIN"/>
</dbReference>
<dbReference type="GO" id="GO:0035770">
    <property type="term" value="C:ribonucleoprotein granule"/>
    <property type="evidence" value="ECO:0000250"/>
    <property type="project" value="UniProtKB"/>
</dbReference>
<dbReference type="GO" id="GO:0003729">
    <property type="term" value="F:mRNA binding"/>
    <property type="evidence" value="ECO:0000250"/>
    <property type="project" value="UniProtKB"/>
</dbReference>
<dbReference type="GO" id="GO:0070306">
    <property type="term" value="P:lens fiber cell differentiation"/>
    <property type="evidence" value="ECO:0000250"/>
    <property type="project" value="UniProtKB"/>
</dbReference>
<dbReference type="GO" id="GO:0002089">
    <property type="term" value="P:lens morphogenesis in camera-type eye"/>
    <property type="evidence" value="ECO:0000250"/>
    <property type="project" value="UniProtKB"/>
</dbReference>
<dbReference type="GO" id="GO:0030719">
    <property type="term" value="P:P granule organization"/>
    <property type="evidence" value="ECO:0000315"/>
    <property type="project" value="ZFIN"/>
</dbReference>
<dbReference type="GO" id="GO:0034587">
    <property type="term" value="P:piRNA processing"/>
    <property type="evidence" value="ECO:0000318"/>
    <property type="project" value="GO_Central"/>
</dbReference>
<dbReference type="GO" id="GO:0010608">
    <property type="term" value="P:post-transcriptional regulation of gene expression"/>
    <property type="evidence" value="ECO:0000250"/>
    <property type="project" value="UniProtKB"/>
</dbReference>
<dbReference type="GO" id="GO:0007283">
    <property type="term" value="P:spermatogenesis"/>
    <property type="evidence" value="ECO:0000250"/>
    <property type="project" value="UniProtKB"/>
</dbReference>
<dbReference type="CDD" id="cd09986">
    <property type="entry name" value="LOTUS_1_TDRD7"/>
    <property type="match status" value="1"/>
</dbReference>
<dbReference type="CDD" id="cd09973">
    <property type="entry name" value="LOTUS_2_TDRD7"/>
    <property type="match status" value="1"/>
</dbReference>
<dbReference type="CDD" id="cd09974">
    <property type="entry name" value="LOTUS_3_TDRD7"/>
    <property type="match status" value="1"/>
</dbReference>
<dbReference type="CDD" id="cd20427">
    <property type="entry name" value="Tudor_TDRD7_rpt1"/>
    <property type="match status" value="1"/>
</dbReference>
<dbReference type="CDD" id="cd20428">
    <property type="entry name" value="Tudor_TDRD7_rpt2"/>
    <property type="match status" value="1"/>
</dbReference>
<dbReference type="CDD" id="cd20429">
    <property type="entry name" value="Tudor_TDRD7_rpt3"/>
    <property type="match status" value="1"/>
</dbReference>
<dbReference type="FunFam" id="3.30.420.610:FF:000008">
    <property type="entry name" value="Tudor domain-containing protein 7"/>
    <property type="match status" value="1"/>
</dbReference>
<dbReference type="FunFam" id="2.30.30.140:FF:000065">
    <property type="entry name" value="tudor domain-containing protein 7"/>
    <property type="match status" value="1"/>
</dbReference>
<dbReference type="Gene3D" id="2.30.30.140">
    <property type="match status" value="3"/>
</dbReference>
<dbReference type="Gene3D" id="2.40.50.90">
    <property type="match status" value="3"/>
</dbReference>
<dbReference type="Gene3D" id="3.30.420.610">
    <property type="entry name" value="LOTUS domain-like"/>
    <property type="match status" value="3"/>
</dbReference>
<dbReference type="InterPro" id="IPR041966">
    <property type="entry name" value="LOTUS-like"/>
</dbReference>
<dbReference type="InterPro" id="IPR025605">
    <property type="entry name" value="OST-HTH/LOTUS_dom"/>
</dbReference>
<dbReference type="InterPro" id="IPR035437">
    <property type="entry name" value="SNase_OB-fold_sf"/>
</dbReference>
<dbReference type="InterPro" id="IPR037978">
    <property type="entry name" value="TDRD7_LOTUS_3"/>
</dbReference>
<dbReference type="InterPro" id="IPR002999">
    <property type="entry name" value="Tudor"/>
</dbReference>
<dbReference type="InterPro" id="IPR050621">
    <property type="entry name" value="Tudor_domain_containing"/>
</dbReference>
<dbReference type="InterPro" id="IPR047448">
    <property type="entry name" value="Tudor_TDRD7_rpt2"/>
</dbReference>
<dbReference type="InterPro" id="IPR047449">
    <property type="entry name" value="Tudor_TDRD7_rpt3"/>
</dbReference>
<dbReference type="PANTHER" id="PTHR22948:SF76">
    <property type="entry name" value="FI20010P1-RELATED"/>
    <property type="match status" value="1"/>
</dbReference>
<dbReference type="PANTHER" id="PTHR22948">
    <property type="entry name" value="TUDOR DOMAIN CONTAINING PROTEIN"/>
    <property type="match status" value="1"/>
</dbReference>
<dbReference type="Pfam" id="PF12872">
    <property type="entry name" value="OST-HTH"/>
    <property type="match status" value="2"/>
</dbReference>
<dbReference type="Pfam" id="PF00567">
    <property type="entry name" value="TUDOR"/>
    <property type="match status" value="3"/>
</dbReference>
<dbReference type="SMART" id="SM00333">
    <property type="entry name" value="TUDOR"/>
    <property type="match status" value="3"/>
</dbReference>
<dbReference type="SUPFAM" id="SSF63748">
    <property type="entry name" value="Tudor/PWWP/MBT"/>
    <property type="match status" value="3"/>
</dbReference>
<dbReference type="PROSITE" id="PS51644">
    <property type="entry name" value="HTH_OST"/>
    <property type="match status" value="3"/>
</dbReference>
<dbReference type="PROSITE" id="PS50304">
    <property type="entry name" value="TUDOR"/>
    <property type="match status" value="1"/>
</dbReference>
<gene>
    <name type="primary">tdrd7a</name>
    <name type="synonym">tdrd7</name>
    <name type="ORF">zgc:56669</name>
</gene>
<reference key="1">
    <citation type="journal article" date="2008" name="BMC Dev. Biol.">
        <title>Control over the morphology and segregation of Zebrafish germ cell granules during embryonic development.</title>
        <authorList>
            <person name="Strasser M.J."/>
            <person name="Mackenzie N.C."/>
            <person name="Dumstrei K."/>
            <person name="Nakkrasae L.I."/>
            <person name="Stebler J."/>
            <person name="Raz E."/>
        </authorList>
    </citation>
    <scope>NUCLEOTIDE SEQUENCE [MRNA] (ISOFORM 1)</scope>
</reference>
<reference key="2">
    <citation type="submission" date="2003-05" db="EMBL/GenBank/DDBJ databases">
        <authorList>
            <consortium name="NIH - Zebrafish Gene Collection (ZGC) project"/>
        </authorList>
    </citation>
    <scope>NUCLEOTIDE SEQUENCE [LARGE SCALE MRNA] (ISOFORM 2)</scope>
</reference>
<reference key="3">
    <citation type="journal article" date="2006" name="Curr. Biol.">
        <title>Differential regulation of germline mRNAs in soma and germ cells by zebrafish miR-430.</title>
        <authorList>
            <person name="Mishima Y."/>
            <person name="Giraldez A.J."/>
            <person name="Takeda Y."/>
            <person name="Fujiwara T."/>
            <person name="Sakamoto H."/>
            <person name="Schier A.F."/>
            <person name="Inoue K."/>
        </authorList>
    </citation>
    <scope>INDUCTION</scope>
</reference>
<reference key="4">
    <citation type="journal article" date="2009" name="Mech. Dev.">
        <title>Control of Dead end localization and activity--implications for the function of the protein in antagonizing miRNA function.</title>
        <authorList>
            <person name="Slanchev K."/>
            <person name="Stebler J."/>
            <person name="Goudarzi M."/>
            <person name="Cojocaru V."/>
            <person name="Weidinger G."/>
            <person name="Raz E."/>
        </authorList>
    </citation>
    <scope>INDUCTION</scope>
</reference>
<reference key="5">
    <citation type="journal article" date="2009" name="PLoS ONE">
        <title>DAZL relieves miRNA-mediated repression of germline mRNAs by controlling poly(A) tail length in zebrafish.</title>
        <authorList>
            <person name="Takeda Y."/>
            <person name="Mishima Y."/>
            <person name="Fujiwara T."/>
            <person name="Sakamoto H."/>
            <person name="Inoue K."/>
        </authorList>
    </citation>
    <scope>DEVELOPMENTAL STAGE</scope>
    <scope>INDUCTION</scope>
</reference>
<reference key="6">
    <citation type="journal article" date="2010" name="FASEB J.">
        <title>Zebrafish dead end possesses ATPase activity that is required for primordial germ cell development.</title>
        <authorList>
            <person name="Liu W."/>
            <person name="Collodi P."/>
        </authorList>
    </citation>
    <scope>INDUCTION</scope>
</reference>
<protein>
    <recommendedName>
        <fullName>Tudor domain-containing protein 7A</fullName>
    </recommendedName>
</protein>
<name>TRD7A_DANRE</name>
<evidence type="ECO:0000250" key="1"/>
<evidence type="ECO:0000255" key="2">
    <source>
        <dbReference type="PROSITE-ProRule" id="PRU00211"/>
    </source>
</evidence>
<evidence type="ECO:0000255" key="3">
    <source>
        <dbReference type="PROSITE-ProRule" id="PRU00975"/>
    </source>
</evidence>
<evidence type="ECO:0000256" key="4">
    <source>
        <dbReference type="SAM" id="MobiDB-lite"/>
    </source>
</evidence>
<evidence type="ECO:0000269" key="5">
    <source>
    </source>
</evidence>
<evidence type="ECO:0000269" key="6">
    <source>
    </source>
</evidence>
<evidence type="ECO:0000269" key="7">
    <source>
    </source>
</evidence>
<evidence type="ECO:0000269" key="8">
    <source>
    </source>
</evidence>
<evidence type="ECO:0000303" key="9">
    <source ref="2"/>
</evidence>
<evidence type="ECO:0000305" key="10"/>